<evidence type="ECO:0000255" key="1">
    <source>
        <dbReference type="HAMAP-Rule" id="MF_01631"/>
    </source>
</evidence>
<reference key="1">
    <citation type="journal article" date="2006" name="Genome Res.">
        <title>Skewed genomic variability in strains of the toxigenic bacterial pathogen, Clostridium perfringens.</title>
        <authorList>
            <person name="Myers G.S.A."/>
            <person name="Rasko D.A."/>
            <person name="Cheung J.K."/>
            <person name="Ravel J."/>
            <person name="Seshadri R."/>
            <person name="DeBoy R.T."/>
            <person name="Ren Q."/>
            <person name="Varga J."/>
            <person name="Awad M.M."/>
            <person name="Brinkac L.M."/>
            <person name="Daugherty S.C."/>
            <person name="Haft D.H."/>
            <person name="Dodson R.J."/>
            <person name="Madupu R."/>
            <person name="Nelson W.C."/>
            <person name="Rosovitz M.J."/>
            <person name="Sullivan S.A."/>
            <person name="Khouri H."/>
            <person name="Dimitrov G.I."/>
            <person name="Watkins K.L."/>
            <person name="Mulligan S."/>
            <person name="Benton J."/>
            <person name="Radune D."/>
            <person name="Fisher D.J."/>
            <person name="Atkins H.S."/>
            <person name="Hiscox T."/>
            <person name="Jost B.H."/>
            <person name="Billington S.J."/>
            <person name="Songer J.G."/>
            <person name="McClane B.A."/>
            <person name="Titball R.W."/>
            <person name="Rood J.I."/>
            <person name="Melville S.B."/>
            <person name="Paulsen I.T."/>
        </authorList>
    </citation>
    <scope>NUCLEOTIDE SEQUENCE [LARGE SCALE GENOMIC DNA]</scope>
    <source>
        <strain>SM101 / Type A</strain>
    </source>
</reference>
<organism>
    <name type="scientific">Clostridium perfringens (strain SM101 / Type A)</name>
    <dbReference type="NCBI Taxonomy" id="289380"/>
    <lineage>
        <taxon>Bacteria</taxon>
        <taxon>Bacillati</taxon>
        <taxon>Bacillota</taxon>
        <taxon>Clostridia</taxon>
        <taxon>Eubacteriales</taxon>
        <taxon>Clostridiaceae</taxon>
        <taxon>Clostridium</taxon>
    </lineage>
</organism>
<feature type="chain" id="PRO_0000263125" description="Bifunctional protein GlmU">
    <location>
        <begin position="1"/>
        <end position="454"/>
    </location>
</feature>
<feature type="region of interest" description="Pyrophosphorylase" evidence="1">
    <location>
        <begin position="1"/>
        <end position="228"/>
    </location>
</feature>
<feature type="region of interest" description="Linker" evidence="1">
    <location>
        <begin position="229"/>
        <end position="249"/>
    </location>
</feature>
<feature type="region of interest" description="N-acetyltransferase" evidence="1">
    <location>
        <begin position="250"/>
        <end position="454"/>
    </location>
</feature>
<feature type="active site" description="Proton acceptor" evidence="1">
    <location>
        <position position="361"/>
    </location>
</feature>
<feature type="binding site" evidence="1">
    <location>
        <begin position="8"/>
        <end position="11"/>
    </location>
    <ligand>
        <name>UDP-N-acetyl-alpha-D-glucosamine</name>
        <dbReference type="ChEBI" id="CHEBI:57705"/>
    </ligand>
</feature>
<feature type="binding site" evidence="1">
    <location>
        <position position="22"/>
    </location>
    <ligand>
        <name>UDP-N-acetyl-alpha-D-glucosamine</name>
        <dbReference type="ChEBI" id="CHEBI:57705"/>
    </ligand>
</feature>
<feature type="binding site" evidence="1">
    <location>
        <position position="73"/>
    </location>
    <ligand>
        <name>UDP-N-acetyl-alpha-D-glucosamine</name>
        <dbReference type="ChEBI" id="CHEBI:57705"/>
    </ligand>
</feature>
<feature type="binding site" evidence="1">
    <location>
        <begin position="78"/>
        <end position="79"/>
    </location>
    <ligand>
        <name>UDP-N-acetyl-alpha-D-glucosamine</name>
        <dbReference type="ChEBI" id="CHEBI:57705"/>
    </ligand>
</feature>
<feature type="binding site" evidence="1">
    <location>
        <position position="103"/>
    </location>
    <ligand>
        <name>Mg(2+)</name>
        <dbReference type="ChEBI" id="CHEBI:18420"/>
    </ligand>
</feature>
<feature type="binding site" evidence="1">
    <location>
        <position position="140"/>
    </location>
    <ligand>
        <name>UDP-N-acetyl-alpha-D-glucosamine</name>
        <dbReference type="ChEBI" id="CHEBI:57705"/>
    </ligand>
</feature>
<feature type="binding site" evidence="1">
    <location>
        <position position="154"/>
    </location>
    <ligand>
        <name>UDP-N-acetyl-alpha-D-glucosamine</name>
        <dbReference type="ChEBI" id="CHEBI:57705"/>
    </ligand>
</feature>
<feature type="binding site" evidence="1">
    <location>
        <position position="169"/>
    </location>
    <ligand>
        <name>UDP-N-acetyl-alpha-D-glucosamine</name>
        <dbReference type="ChEBI" id="CHEBI:57705"/>
    </ligand>
</feature>
<feature type="binding site" evidence="1">
    <location>
        <position position="226"/>
    </location>
    <ligand>
        <name>Mg(2+)</name>
        <dbReference type="ChEBI" id="CHEBI:18420"/>
    </ligand>
</feature>
<feature type="binding site" evidence="1">
    <location>
        <position position="226"/>
    </location>
    <ligand>
        <name>UDP-N-acetyl-alpha-D-glucosamine</name>
        <dbReference type="ChEBI" id="CHEBI:57705"/>
    </ligand>
</feature>
<feature type="binding site" evidence="1">
    <location>
        <position position="331"/>
    </location>
    <ligand>
        <name>UDP-N-acetyl-alpha-D-glucosamine</name>
        <dbReference type="ChEBI" id="CHEBI:57705"/>
    </ligand>
</feature>
<feature type="binding site" evidence="1">
    <location>
        <position position="349"/>
    </location>
    <ligand>
        <name>UDP-N-acetyl-alpha-D-glucosamine</name>
        <dbReference type="ChEBI" id="CHEBI:57705"/>
    </ligand>
</feature>
<feature type="binding site" evidence="1">
    <location>
        <position position="364"/>
    </location>
    <ligand>
        <name>UDP-N-acetyl-alpha-D-glucosamine</name>
        <dbReference type="ChEBI" id="CHEBI:57705"/>
    </ligand>
</feature>
<feature type="binding site" evidence="1">
    <location>
        <position position="375"/>
    </location>
    <ligand>
        <name>UDP-N-acetyl-alpha-D-glucosamine</name>
        <dbReference type="ChEBI" id="CHEBI:57705"/>
    </ligand>
</feature>
<feature type="binding site" evidence="1">
    <location>
        <begin position="384"/>
        <end position="385"/>
    </location>
    <ligand>
        <name>acetyl-CoA</name>
        <dbReference type="ChEBI" id="CHEBI:57288"/>
    </ligand>
</feature>
<feature type="binding site" evidence="1">
    <location>
        <position position="421"/>
    </location>
    <ligand>
        <name>acetyl-CoA</name>
        <dbReference type="ChEBI" id="CHEBI:57288"/>
    </ligand>
</feature>
<feature type="binding site" evidence="1">
    <location>
        <position position="438"/>
    </location>
    <ligand>
        <name>acetyl-CoA</name>
        <dbReference type="ChEBI" id="CHEBI:57288"/>
    </ligand>
</feature>
<proteinExistence type="inferred from homology"/>
<gene>
    <name evidence="1" type="primary">glmU</name>
    <name type="ordered locus">CPR_2499</name>
</gene>
<keyword id="KW-0012">Acyltransferase</keyword>
<keyword id="KW-0133">Cell shape</keyword>
<keyword id="KW-0961">Cell wall biogenesis/degradation</keyword>
<keyword id="KW-0963">Cytoplasm</keyword>
<keyword id="KW-0460">Magnesium</keyword>
<keyword id="KW-0479">Metal-binding</keyword>
<keyword id="KW-0511">Multifunctional enzyme</keyword>
<keyword id="KW-0548">Nucleotidyltransferase</keyword>
<keyword id="KW-0573">Peptidoglycan synthesis</keyword>
<keyword id="KW-0677">Repeat</keyword>
<keyword id="KW-0808">Transferase</keyword>
<sequence length="454" mass="49593">MNKCAIILAAGQGTRIKSKLPKVLHKACGKEMVNHVIDAMRNAEIDDVNVIIGKGAELVKERTTSKNVSYSLQAEQLGTGHAVKCAKDFLEGKTGVVAIFTGDAPLIKAETVKNLVDTHINEKNSATLLTSVIENPTGYGRIVRNGESVEKIVEHKDCNEQEIKIQEVNAGMYCFDIESLLTSLEQLSNDNAQGEYYLTDVIEILKKDNKKVGAMITDFEETLGVNSRAELAKVESIMRNRINRTHLDNGVTIIDPLNTYIEPEVVIGKDTIIYPGNVIEGKTVIGEDCILYPNSRINNSTIGNGVEIQSSVILDSKIGDETTVGPFAYVRPESNIGEHVRIGDFVEIKKSTIGNNTKVSHLTYIGDAEVGERCNFGCGTVVVNYDGKKKHKTIIGDDSFIGCNTNLVSPVEVKDNTYIAAGSTITKEVPEGSLAIARAKQQNIEGWVERKKLK</sequence>
<dbReference type="EC" id="2.7.7.23" evidence="1"/>
<dbReference type="EC" id="2.3.1.157" evidence="1"/>
<dbReference type="EMBL" id="CP000312">
    <property type="protein sequence ID" value="ABG87079.1"/>
    <property type="molecule type" value="Genomic_DNA"/>
</dbReference>
<dbReference type="RefSeq" id="WP_011593193.1">
    <property type="nucleotide sequence ID" value="NC_008262.1"/>
</dbReference>
<dbReference type="SMR" id="Q0SQ61"/>
<dbReference type="KEGG" id="cpr:CPR_2499"/>
<dbReference type="UniPathway" id="UPA00113">
    <property type="reaction ID" value="UER00532"/>
</dbReference>
<dbReference type="UniPathway" id="UPA00113">
    <property type="reaction ID" value="UER00533"/>
</dbReference>
<dbReference type="UniPathway" id="UPA00973"/>
<dbReference type="Proteomes" id="UP000001824">
    <property type="component" value="Chromosome"/>
</dbReference>
<dbReference type="GO" id="GO:0005737">
    <property type="term" value="C:cytoplasm"/>
    <property type="evidence" value="ECO:0007669"/>
    <property type="project" value="UniProtKB-SubCell"/>
</dbReference>
<dbReference type="GO" id="GO:0016020">
    <property type="term" value="C:membrane"/>
    <property type="evidence" value="ECO:0007669"/>
    <property type="project" value="GOC"/>
</dbReference>
<dbReference type="GO" id="GO:0019134">
    <property type="term" value="F:glucosamine-1-phosphate N-acetyltransferase activity"/>
    <property type="evidence" value="ECO:0007669"/>
    <property type="project" value="UniProtKB-UniRule"/>
</dbReference>
<dbReference type="GO" id="GO:0000287">
    <property type="term" value="F:magnesium ion binding"/>
    <property type="evidence" value="ECO:0007669"/>
    <property type="project" value="UniProtKB-UniRule"/>
</dbReference>
<dbReference type="GO" id="GO:0003977">
    <property type="term" value="F:UDP-N-acetylglucosamine diphosphorylase activity"/>
    <property type="evidence" value="ECO:0007669"/>
    <property type="project" value="UniProtKB-UniRule"/>
</dbReference>
<dbReference type="GO" id="GO:0000902">
    <property type="term" value="P:cell morphogenesis"/>
    <property type="evidence" value="ECO:0007669"/>
    <property type="project" value="UniProtKB-UniRule"/>
</dbReference>
<dbReference type="GO" id="GO:0071555">
    <property type="term" value="P:cell wall organization"/>
    <property type="evidence" value="ECO:0007669"/>
    <property type="project" value="UniProtKB-KW"/>
</dbReference>
<dbReference type="GO" id="GO:0009245">
    <property type="term" value="P:lipid A biosynthetic process"/>
    <property type="evidence" value="ECO:0007669"/>
    <property type="project" value="UniProtKB-UniRule"/>
</dbReference>
<dbReference type="GO" id="GO:0009252">
    <property type="term" value="P:peptidoglycan biosynthetic process"/>
    <property type="evidence" value="ECO:0007669"/>
    <property type="project" value="UniProtKB-UniRule"/>
</dbReference>
<dbReference type="GO" id="GO:0008360">
    <property type="term" value="P:regulation of cell shape"/>
    <property type="evidence" value="ECO:0007669"/>
    <property type="project" value="UniProtKB-KW"/>
</dbReference>
<dbReference type="GO" id="GO:0006048">
    <property type="term" value="P:UDP-N-acetylglucosamine biosynthetic process"/>
    <property type="evidence" value="ECO:0007669"/>
    <property type="project" value="UniProtKB-UniPathway"/>
</dbReference>
<dbReference type="CDD" id="cd02540">
    <property type="entry name" value="GT2_GlmU_N_bac"/>
    <property type="match status" value="1"/>
</dbReference>
<dbReference type="CDD" id="cd03353">
    <property type="entry name" value="LbH_GlmU_C"/>
    <property type="match status" value="1"/>
</dbReference>
<dbReference type="Gene3D" id="2.160.10.10">
    <property type="entry name" value="Hexapeptide repeat proteins"/>
    <property type="match status" value="1"/>
</dbReference>
<dbReference type="Gene3D" id="3.90.550.10">
    <property type="entry name" value="Spore Coat Polysaccharide Biosynthesis Protein SpsA, Chain A"/>
    <property type="match status" value="1"/>
</dbReference>
<dbReference type="HAMAP" id="MF_01631">
    <property type="entry name" value="GlmU"/>
    <property type="match status" value="1"/>
</dbReference>
<dbReference type="InterPro" id="IPR005882">
    <property type="entry name" value="Bifunctional_GlmU"/>
</dbReference>
<dbReference type="InterPro" id="IPR050065">
    <property type="entry name" value="GlmU-like"/>
</dbReference>
<dbReference type="InterPro" id="IPR038009">
    <property type="entry name" value="GlmU_C_LbH"/>
</dbReference>
<dbReference type="InterPro" id="IPR001451">
    <property type="entry name" value="Hexapep"/>
</dbReference>
<dbReference type="InterPro" id="IPR005835">
    <property type="entry name" value="NTP_transferase_dom"/>
</dbReference>
<dbReference type="InterPro" id="IPR029044">
    <property type="entry name" value="Nucleotide-diphossugar_trans"/>
</dbReference>
<dbReference type="InterPro" id="IPR011004">
    <property type="entry name" value="Trimer_LpxA-like_sf"/>
</dbReference>
<dbReference type="NCBIfam" id="TIGR01173">
    <property type="entry name" value="glmU"/>
    <property type="match status" value="1"/>
</dbReference>
<dbReference type="NCBIfam" id="NF010934">
    <property type="entry name" value="PRK14354.1"/>
    <property type="match status" value="1"/>
</dbReference>
<dbReference type="PANTHER" id="PTHR43584:SF3">
    <property type="entry name" value="BIFUNCTIONAL PROTEIN GLMU"/>
    <property type="match status" value="1"/>
</dbReference>
<dbReference type="PANTHER" id="PTHR43584">
    <property type="entry name" value="NUCLEOTIDYL TRANSFERASE"/>
    <property type="match status" value="1"/>
</dbReference>
<dbReference type="Pfam" id="PF00132">
    <property type="entry name" value="Hexapep"/>
    <property type="match status" value="2"/>
</dbReference>
<dbReference type="Pfam" id="PF00483">
    <property type="entry name" value="NTP_transferase"/>
    <property type="match status" value="1"/>
</dbReference>
<dbReference type="SUPFAM" id="SSF53448">
    <property type="entry name" value="Nucleotide-diphospho-sugar transferases"/>
    <property type="match status" value="1"/>
</dbReference>
<dbReference type="SUPFAM" id="SSF51161">
    <property type="entry name" value="Trimeric LpxA-like enzymes"/>
    <property type="match status" value="1"/>
</dbReference>
<name>GLMU_CLOPS</name>
<protein>
    <recommendedName>
        <fullName evidence="1">Bifunctional protein GlmU</fullName>
    </recommendedName>
    <domain>
        <recommendedName>
            <fullName evidence="1">UDP-N-acetylglucosamine pyrophosphorylase</fullName>
            <ecNumber evidence="1">2.7.7.23</ecNumber>
        </recommendedName>
        <alternativeName>
            <fullName evidence="1">N-acetylglucosamine-1-phosphate uridyltransferase</fullName>
        </alternativeName>
    </domain>
    <domain>
        <recommendedName>
            <fullName evidence="1">Glucosamine-1-phosphate N-acetyltransferase</fullName>
            <ecNumber evidence="1">2.3.1.157</ecNumber>
        </recommendedName>
    </domain>
</protein>
<comment type="function">
    <text evidence="1">Catalyzes the last two sequential reactions in the de novo biosynthetic pathway for UDP-N-acetylglucosamine (UDP-GlcNAc). The C-terminal domain catalyzes the transfer of acetyl group from acetyl coenzyme A to glucosamine-1-phosphate (GlcN-1-P) to produce N-acetylglucosamine-1-phosphate (GlcNAc-1-P), which is converted into UDP-GlcNAc by the transfer of uridine 5-monophosphate (from uridine 5-triphosphate), a reaction catalyzed by the N-terminal domain.</text>
</comment>
<comment type="catalytic activity">
    <reaction evidence="1">
        <text>alpha-D-glucosamine 1-phosphate + acetyl-CoA = N-acetyl-alpha-D-glucosamine 1-phosphate + CoA + H(+)</text>
        <dbReference type="Rhea" id="RHEA:13725"/>
        <dbReference type="ChEBI" id="CHEBI:15378"/>
        <dbReference type="ChEBI" id="CHEBI:57287"/>
        <dbReference type="ChEBI" id="CHEBI:57288"/>
        <dbReference type="ChEBI" id="CHEBI:57776"/>
        <dbReference type="ChEBI" id="CHEBI:58516"/>
        <dbReference type="EC" id="2.3.1.157"/>
    </reaction>
</comment>
<comment type="catalytic activity">
    <reaction evidence="1">
        <text>N-acetyl-alpha-D-glucosamine 1-phosphate + UTP + H(+) = UDP-N-acetyl-alpha-D-glucosamine + diphosphate</text>
        <dbReference type="Rhea" id="RHEA:13509"/>
        <dbReference type="ChEBI" id="CHEBI:15378"/>
        <dbReference type="ChEBI" id="CHEBI:33019"/>
        <dbReference type="ChEBI" id="CHEBI:46398"/>
        <dbReference type="ChEBI" id="CHEBI:57705"/>
        <dbReference type="ChEBI" id="CHEBI:57776"/>
        <dbReference type="EC" id="2.7.7.23"/>
    </reaction>
</comment>
<comment type="cofactor">
    <cofactor evidence="1">
        <name>Mg(2+)</name>
        <dbReference type="ChEBI" id="CHEBI:18420"/>
    </cofactor>
    <text evidence="1">Binds 1 Mg(2+) ion per subunit.</text>
</comment>
<comment type="pathway">
    <text evidence="1">Nucleotide-sugar biosynthesis; UDP-N-acetyl-alpha-D-glucosamine biosynthesis; N-acetyl-alpha-D-glucosamine 1-phosphate from alpha-D-glucosamine 6-phosphate (route II): step 2/2.</text>
</comment>
<comment type="pathway">
    <text evidence="1">Nucleotide-sugar biosynthesis; UDP-N-acetyl-alpha-D-glucosamine biosynthesis; UDP-N-acetyl-alpha-D-glucosamine from N-acetyl-alpha-D-glucosamine 1-phosphate: step 1/1.</text>
</comment>
<comment type="pathway">
    <text evidence="1">Bacterial outer membrane biogenesis; LPS lipid A biosynthesis.</text>
</comment>
<comment type="subunit">
    <text evidence="1">Homotrimer.</text>
</comment>
<comment type="subcellular location">
    <subcellularLocation>
        <location evidence="1">Cytoplasm</location>
    </subcellularLocation>
</comment>
<comment type="similarity">
    <text evidence="1">In the N-terminal section; belongs to the N-acetylglucosamine-1-phosphate uridyltransferase family.</text>
</comment>
<comment type="similarity">
    <text evidence="1">In the C-terminal section; belongs to the transferase hexapeptide repeat family.</text>
</comment>
<accession>Q0SQ61</accession>